<organism>
    <name type="scientific">Drosophila melanogaster</name>
    <name type="common">Fruit fly</name>
    <dbReference type="NCBI Taxonomy" id="7227"/>
    <lineage>
        <taxon>Eukaryota</taxon>
        <taxon>Metazoa</taxon>
        <taxon>Ecdysozoa</taxon>
        <taxon>Arthropoda</taxon>
        <taxon>Hexapoda</taxon>
        <taxon>Insecta</taxon>
        <taxon>Pterygota</taxon>
        <taxon>Neoptera</taxon>
        <taxon>Endopterygota</taxon>
        <taxon>Diptera</taxon>
        <taxon>Brachycera</taxon>
        <taxon>Muscomorpha</taxon>
        <taxon>Ephydroidea</taxon>
        <taxon>Drosophilidae</taxon>
        <taxon>Drosophila</taxon>
        <taxon>Sophophora</taxon>
    </lineage>
</organism>
<gene>
    <name evidence="13" type="primary">Sirt1</name>
    <name evidence="11" type="synonym">Sir2</name>
    <name evidence="13" type="ORF">CG5216</name>
</gene>
<protein>
    <recommendedName>
        <fullName evidence="13">NAD-dependent histone deacetylase sirtuin-1</fullName>
        <ecNumber evidence="2">2.3.1.286</ecNumber>
    </recommendedName>
    <alternativeName>
        <fullName evidence="11">Silent information regulator 2</fullName>
    </alternativeName>
</protein>
<name>SIRT1_DROME</name>
<reference key="1">
    <citation type="journal article" date="2003" name="Genetics">
        <title>The Drosophila melanogaster sir2+ gene is nonessential and has only minor effects on position-effect variegation.</title>
        <authorList>
            <person name="Astrom S.U."/>
            <person name="Cline T.W."/>
            <person name="Rine J."/>
        </authorList>
    </citation>
    <scope>NUCLEOTIDE SEQUENCE [MRNA]</scope>
    <scope>FUNCTION</scope>
</reference>
<reference key="2">
    <citation type="journal article" date="2000" name="Science">
        <title>The genome sequence of Drosophila melanogaster.</title>
        <authorList>
            <person name="Adams M.D."/>
            <person name="Celniker S.E."/>
            <person name="Holt R.A."/>
            <person name="Evans C.A."/>
            <person name="Gocayne J.D."/>
            <person name="Amanatides P.G."/>
            <person name="Scherer S.E."/>
            <person name="Li P.W."/>
            <person name="Hoskins R.A."/>
            <person name="Galle R.F."/>
            <person name="George R.A."/>
            <person name="Lewis S.E."/>
            <person name="Richards S."/>
            <person name="Ashburner M."/>
            <person name="Henderson S.N."/>
            <person name="Sutton G.G."/>
            <person name="Wortman J.R."/>
            <person name="Yandell M.D."/>
            <person name="Zhang Q."/>
            <person name="Chen L.X."/>
            <person name="Brandon R.C."/>
            <person name="Rogers Y.-H.C."/>
            <person name="Blazej R.G."/>
            <person name="Champe M."/>
            <person name="Pfeiffer B.D."/>
            <person name="Wan K.H."/>
            <person name="Doyle C."/>
            <person name="Baxter E.G."/>
            <person name="Helt G."/>
            <person name="Nelson C.R."/>
            <person name="Miklos G.L.G."/>
            <person name="Abril J.F."/>
            <person name="Agbayani A."/>
            <person name="An H.-J."/>
            <person name="Andrews-Pfannkoch C."/>
            <person name="Baldwin D."/>
            <person name="Ballew R.M."/>
            <person name="Basu A."/>
            <person name="Baxendale J."/>
            <person name="Bayraktaroglu L."/>
            <person name="Beasley E.M."/>
            <person name="Beeson K.Y."/>
            <person name="Benos P.V."/>
            <person name="Berman B.P."/>
            <person name="Bhandari D."/>
            <person name="Bolshakov S."/>
            <person name="Borkova D."/>
            <person name="Botchan M.R."/>
            <person name="Bouck J."/>
            <person name="Brokstein P."/>
            <person name="Brottier P."/>
            <person name="Burtis K.C."/>
            <person name="Busam D.A."/>
            <person name="Butler H."/>
            <person name="Cadieu E."/>
            <person name="Center A."/>
            <person name="Chandra I."/>
            <person name="Cherry J.M."/>
            <person name="Cawley S."/>
            <person name="Dahlke C."/>
            <person name="Davenport L.B."/>
            <person name="Davies P."/>
            <person name="de Pablos B."/>
            <person name="Delcher A."/>
            <person name="Deng Z."/>
            <person name="Mays A.D."/>
            <person name="Dew I."/>
            <person name="Dietz S.M."/>
            <person name="Dodson K."/>
            <person name="Doup L.E."/>
            <person name="Downes M."/>
            <person name="Dugan-Rocha S."/>
            <person name="Dunkov B.C."/>
            <person name="Dunn P."/>
            <person name="Durbin K.J."/>
            <person name="Evangelista C.C."/>
            <person name="Ferraz C."/>
            <person name="Ferriera S."/>
            <person name="Fleischmann W."/>
            <person name="Fosler C."/>
            <person name="Gabrielian A.E."/>
            <person name="Garg N.S."/>
            <person name="Gelbart W.M."/>
            <person name="Glasser K."/>
            <person name="Glodek A."/>
            <person name="Gong F."/>
            <person name="Gorrell J.H."/>
            <person name="Gu Z."/>
            <person name="Guan P."/>
            <person name="Harris M."/>
            <person name="Harris N.L."/>
            <person name="Harvey D.A."/>
            <person name="Heiman T.J."/>
            <person name="Hernandez J.R."/>
            <person name="Houck J."/>
            <person name="Hostin D."/>
            <person name="Houston K.A."/>
            <person name="Howland T.J."/>
            <person name="Wei M.-H."/>
            <person name="Ibegwam C."/>
            <person name="Jalali M."/>
            <person name="Kalush F."/>
            <person name="Karpen G.H."/>
            <person name="Ke Z."/>
            <person name="Kennison J.A."/>
            <person name="Ketchum K.A."/>
            <person name="Kimmel B.E."/>
            <person name="Kodira C.D."/>
            <person name="Kraft C.L."/>
            <person name="Kravitz S."/>
            <person name="Kulp D."/>
            <person name="Lai Z."/>
            <person name="Lasko P."/>
            <person name="Lei Y."/>
            <person name="Levitsky A.A."/>
            <person name="Li J.H."/>
            <person name="Li Z."/>
            <person name="Liang Y."/>
            <person name="Lin X."/>
            <person name="Liu X."/>
            <person name="Mattei B."/>
            <person name="McIntosh T.C."/>
            <person name="McLeod M.P."/>
            <person name="McPherson D."/>
            <person name="Merkulov G."/>
            <person name="Milshina N.V."/>
            <person name="Mobarry C."/>
            <person name="Morris J."/>
            <person name="Moshrefi A."/>
            <person name="Mount S.M."/>
            <person name="Moy M."/>
            <person name="Murphy B."/>
            <person name="Murphy L."/>
            <person name="Muzny D.M."/>
            <person name="Nelson D.L."/>
            <person name="Nelson D.R."/>
            <person name="Nelson K.A."/>
            <person name="Nixon K."/>
            <person name="Nusskern D.R."/>
            <person name="Pacleb J.M."/>
            <person name="Palazzolo M."/>
            <person name="Pittman G.S."/>
            <person name="Pan S."/>
            <person name="Pollard J."/>
            <person name="Puri V."/>
            <person name="Reese M.G."/>
            <person name="Reinert K."/>
            <person name="Remington K."/>
            <person name="Saunders R.D.C."/>
            <person name="Scheeler F."/>
            <person name="Shen H."/>
            <person name="Shue B.C."/>
            <person name="Siden-Kiamos I."/>
            <person name="Simpson M."/>
            <person name="Skupski M.P."/>
            <person name="Smith T.J."/>
            <person name="Spier E."/>
            <person name="Spradling A.C."/>
            <person name="Stapleton M."/>
            <person name="Strong R."/>
            <person name="Sun E."/>
            <person name="Svirskas R."/>
            <person name="Tector C."/>
            <person name="Turner R."/>
            <person name="Venter E."/>
            <person name="Wang A.H."/>
            <person name="Wang X."/>
            <person name="Wang Z.-Y."/>
            <person name="Wassarman D.A."/>
            <person name="Weinstock G.M."/>
            <person name="Weissenbach J."/>
            <person name="Williams S.M."/>
            <person name="Woodage T."/>
            <person name="Worley K.C."/>
            <person name="Wu D."/>
            <person name="Yang S."/>
            <person name="Yao Q.A."/>
            <person name="Ye J."/>
            <person name="Yeh R.-F."/>
            <person name="Zaveri J.S."/>
            <person name="Zhan M."/>
            <person name="Zhang G."/>
            <person name="Zhao Q."/>
            <person name="Zheng L."/>
            <person name="Zheng X.H."/>
            <person name="Zhong F.N."/>
            <person name="Zhong W."/>
            <person name="Zhou X."/>
            <person name="Zhu S.C."/>
            <person name="Zhu X."/>
            <person name="Smith H.O."/>
            <person name="Gibbs R.A."/>
            <person name="Myers E.W."/>
            <person name="Rubin G.M."/>
            <person name="Venter J.C."/>
        </authorList>
    </citation>
    <scope>NUCLEOTIDE SEQUENCE [LARGE SCALE GENOMIC DNA]</scope>
    <source>
        <strain>Berkeley</strain>
    </source>
</reference>
<reference key="3">
    <citation type="journal article" date="2002" name="Genome Biol.">
        <title>Annotation of the Drosophila melanogaster euchromatic genome: a systematic review.</title>
        <authorList>
            <person name="Misra S."/>
            <person name="Crosby M.A."/>
            <person name="Mungall C.J."/>
            <person name="Matthews B.B."/>
            <person name="Campbell K.S."/>
            <person name="Hradecky P."/>
            <person name="Huang Y."/>
            <person name="Kaminker J.S."/>
            <person name="Millburn G.H."/>
            <person name="Prochnik S.E."/>
            <person name="Smith C.D."/>
            <person name="Tupy J.L."/>
            <person name="Whitfield E.J."/>
            <person name="Bayraktaroglu L."/>
            <person name="Berman B.P."/>
            <person name="Bettencourt B.R."/>
            <person name="Celniker S.E."/>
            <person name="de Grey A.D.N.J."/>
            <person name="Drysdale R.A."/>
            <person name="Harris N.L."/>
            <person name="Richter J."/>
            <person name="Russo S."/>
            <person name="Schroeder A.J."/>
            <person name="Shu S.Q."/>
            <person name="Stapleton M."/>
            <person name="Yamada C."/>
            <person name="Ashburner M."/>
            <person name="Gelbart W.M."/>
            <person name="Rubin G.M."/>
            <person name="Lewis S.E."/>
        </authorList>
    </citation>
    <scope>GENOME REANNOTATION</scope>
    <source>
        <strain>Berkeley</strain>
    </source>
</reference>
<reference key="4">
    <citation type="submission" date="2010-04" db="EMBL/GenBank/DDBJ databases">
        <authorList>
            <person name="Carlson J."/>
            <person name="Booth B."/>
            <person name="Frise E."/>
            <person name="Park S."/>
            <person name="Wan K."/>
            <person name="Yu C."/>
            <person name="Celniker S.E."/>
        </authorList>
    </citation>
    <scope>NUCLEOTIDE SEQUENCE [LARGE SCALE MRNA]</scope>
    <source>
        <strain>Berkeley</strain>
    </source>
</reference>
<reference key="5">
    <citation type="journal article" date="2001" name="Exp. Cell Res.">
        <title>dSIR2 and dHDAC6: two novel, inhibitor-resistant deacetylases in Drosophila melanogaster.</title>
        <authorList>
            <person name="Barlow A.L."/>
            <person name="van Drunen C.M."/>
            <person name="Johnson C.A."/>
            <person name="Tweedie S."/>
            <person name="Bird A."/>
            <person name="Turner B.M."/>
        </authorList>
    </citation>
    <scope>FUNCTION</scope>
    <scope>SUBCELLULAR LOCATION</scope>
    <scope>BIOPHYSICOCHEMICAL PROPERTIES</scope>
</reference>
<reference key="6">
    <citation type="journal article" date="2002" name="Cell">
        <title>Drosophila Sir2 is required for heterochromatic silencing and by euchromatic Hairy/E(Spl) bHLH repressors in segmentation and sex determination.</title>
        <authorList>
            <person name="Rosenberg M.I."/>
            <person name="Parkhurst S.M."/>
        </authorList>
    </citation>
    <scope>FUNCTION</scope>
    <scope>SUBCELLULAR LOCATION</scope>
    <scope>INTERACTION WITH H AND DPN</scope>
</reference>
<reference key="7">
    <citation type="journal article" date="2004" name="Curr. Biol.">
        <title>SIR2 is required for polycomb silencing and is associated with an E(Z) histone methyltransferase complex.</title>
        <authorList>
            <person name="Furuyama T."/>
            <person name="Banerjee R."/>
            <person name="Breen T.R."/>
            <person name="Harte P.J."/>
        </authorList>
    </citation>
    <scope>FUNCTION</scope>
    <scope>INTERACTION WITH E(Z) AND HDAC1</scope>
</reference>
<reference key="8">
    <citation type="journal article" date="2004" name="Proc. Natl. Acad. Sci. U.S.A.">
        <title>Sir2 mediates longevity in the fly through a pathway related to calorie restriction.</title>
        <authorList>
            <person name="Rogina B."/>
            <person name="Helfand S.L."/>
        </authorList>
    </citation>
    <scope>FUNCTION</scope>
</reference>
<reference key="9">
    <citation type="journal article" date="2006" name="Genes Genet. Syst.">
        <title>Involvement of Drosophila Sir2-like genes in the regulation of life span.</title>
        <authorList>
            <person name="Kusama S."/>
            <person name="Ueda R."/>
            <person name="Suda T."/>
            <person name="Nishihara S."/>
            <person name="Matsuura E.T."/>
        </authorList>
    </citation>
    <scope>FUNCTION</scope>
    <scope>DISRUPTION PHENOTYPE</scope>
</reference>
<reference key="10">
    <citation type="journal article" date="2008" name="J. Proteome Res.">
        <title>Phosphoproteome analysis of Drosophila melanogaster embryos.</title>
        <authorList>
            <person name="Zhai B."/>
            <person name="Villen J."/>
            <person name="Beausoleil S.A."/>
            <person name="Mintseris J."/>
            <person name="Gygi S.P."/>
        </authorList>
    </citation>
    <scope>PHOSPHORYLATION [LARGE SCALE ANALYSIS] AT SER-618 AND SER-621</scope>
    <scope>IDENTIFICATION BY MASS SPECTROMETRY</scope>
    <source>
        <tissue>Embryo</tissue>
    </source>
</reference>
<proteinExistence type="evidence at protein level"/>
<keyword id="KW-0158">Chromosome</keyword>
<keyword id="KW-0963">Cytoplasm</keyword>
<keyword id="KW-0479">Metal-binding</keyword>
<keyword id="KW-0520">NAD</keyword>
<keyword id="KW-0539">Nucleus</keyword>
<keyword id="KW-0597">Phosphoprotein</keyword>
<keyword id="KW-1185">Reference proteome</keyword>
<keyword id="KW-0678">Repressor</keyword>
<keyword id="KW-0804">Transcription</keyword>
<keyword id="KW-0805">Transcription regulation</keyword>
<keyword id="KW-0808">Transferase</keyword>
<keyword id="KW-0862">Zinc</keyword>
<comment type="function">
    <text evidence="4 5 6 7 8 9">NAD-dependent histone deacetylase involved in heterochromatic silencing. Mildly suppresses the heterochromatin-mediated silencing phenomenon known as position-effect variegation (PEV). Required for epigenetic silencing of the polycomb group proteins. Has histone H4 deacetylase activity in vitro. Required maternally for establishing proper segmentation of the embryo. Involved in sex determination. May be involved in the regulation of life span.</text>
</comment>
<comment type="catalytic activity">
    <reaction evidence="2">
        <text>N(6)-acetyl-L-lysyl-[protein] + NAD(+) + H2O = 2''-O-acetyl-ADP-D-ribose + nicotinamide + L-lysyl-[protein]</text>
        <dbReference type="Rhea" id="RHEA:43636"/>
        <dbReference type="Rhea" id="RHEA-COMP:9752"/>
        <dbReference type="Rhea" id="RHEA-COMP:10731"/>
        <dbReference type="ChEBI" id="CHEBI:15377"/>
        <dbReference type="ChEBI" id="CHEBI:17154"/>
        <dbReference type="ChEBI" id="CHEBI:29969"/>
        <dbReference type="ChEBI" id="CHEBI:57540"/>
        <dbReference type="ChEBI" id="CHEBI:61930"/>
        <dbReference type="ChEBI" id="CHEBI:83767"/>
        <dbReference type="EC" id="2.3.1.286"/>
    </reaction>
</comment>
<comment type="cofactor">
    <cofactor evidence="1">
        <name>Zn(2+)</name>
        <dbReference type="ChEBI" id="CHEBI:29105"/>
    </cofactor>
    <text evidence="1">Binds 1 zinc ion per subunit.</text>
</comment>
<comment type="biophysicochemical properties">
    <phDependence>
        <text evidence="4">Optimum pH is 9.</text>
    </phDependence>
</comment>
<comment type="subunit">
    <text evidence="5 7">Interacts with the transcriptional repressors hairy (hry) and deadpan (dpn); via basic domains. Associates with the Esc/E(z) histone methyltransferase complex. Interacts directly with E(z) and HDAC1/Rpd3.</text>
</comment>
<comment type="subcellular location">
    <subcellularLocation>
        <location evidence="5">Cytoplasm</location>
    </subcellularLocation>
    <subcellularLocation>
        <location evidence="4 5">Nucleus</location>
    </subcellularLocation>
    <subcellularLocation>
        <location evidence="5">Chromosome</location>
    </subcellularLocation>
</comment>
<comment type="disruption phenotype">
    <text evidence="9">Causes lethality during development. Induced silencing shortens life span.</text>
</comment>
<comment type="similarity">
    <text evidence="12">Belongs to the sirtuin family. Class I subfamily.</text>
</comment>
<dbReference type="EC" id="2.3.1.286" evidence="2"/>
<dbReference type="EMBL" id="AF068758">
    <property type="protein sequence ID" value="AAC79684.1"/>
    <property type="molecule type" value="mRNA"/>
</dbReference>
<dbReference type="EMBL" id="AE014134">
    <property type="protein sequence ID" value="AAF53248.1"/>
    <property type="molecule type" value="Genomic_DNA"/>
</dbReference>
<dbReference type="EMBL" id="BT124857">
    <property type="protein sequence ID" value="ADG03442.1"/>
    <property type="molecule type" value="mRNA"/>
</dbReference>
<dbReference type="EMBL" id="BT133215">
    <property type="protein sequence ID" value="AFA28456.1"/>
    <property type="molecule type" value="mRNA"/>
</dbReference>
<dbReference type="EMBL" id="BT133274">
    <property type="protein sequence ID" value="AFC38905.1"/>
    <property type="molecule type" value="mRNA"/>
</dbReference>
<dbReference type="RefSeq" id="NP_477351.1">
    <property type="nucleotide sequence ID" value="NM_058003.4"/>
</dbReference>
<dbReference type="SMR" id="Q9VK34"/>
<dbReference type="BioGRID" id="60746">
    <property type="interactions" value="41"/>
</dbReference>
<dbReference type="FunCoup" id="Q9VK34">
    <property type="interactions" value="450"/>
</dbReference>
<dbReference type="IntAct" id="Q9VK34">
    <property type="interactions" value="6"/>
</dbReference>
<dbReference type="STRING" id="7227.FBpp0080015"/>
<dbReference type="iPTMnet" id="Q9VK34"/>
<dbReference type="PaxDb" id="7227-FBpp0080015"/>
<dbReference type="EnsemblMetazoa" id="FBtr0080434">
    <property type="protein sequence ID" value="FBpp0080015"/>
    <property type="gene ID" value="FBgn0024291"/>
</dbReference>
<dbReference type="GeneID" id="34708"/>
<dbReference type="KEGG" id="dme:Dmel_CG5216"/>
<dbReference type="UCSC" id="CG5216-RA">
    <property type="organism name" value="d. melanogaster"/>
</dbReference>
<dbReference type="AGR" id="FB:FBgn0024291"/>
<dbReference type="CTD" id="23411"/>
<dbReference type="FlyBase" id="FBgn0024291">
    <property type="gene designation" value="Sirt1"/>
</dbReference>
<dbReference type="VEuPathDB" id="VectorBase:FBgn0024291"/>
<dbReference type="eggNOG" id="KOG2684">
    <property type="taxonomic scope" value="Eukaryota"/>
</dbReference>
<dbReference type="GeneTree" id="ENSGT00940000159406"/>
<dbReference type="HOGENOM" id="CLU_016587_1_0_1"/>
<dbReference type="InParanoid" id="Q9VK34"/>
<dbReference type="OMA" id="DEYHTVM"/>
<dbReference type="OrthoDB" id="424302at2759"/>
<dbReference type="PhylomeDB" id="Q9VK34"/>
<dbReference type="BRENDA" id="2.3.1.286">
    <property type="organism ID" value="1994"/>
</dbReference>
<dbReference type="Reactome" id="R-DME-427359">
    <property type="pathway name" value="SIRT1 negatively regulates rRNA expression"/>
</dbReference>
<dbReference type="Reactome" id="R-DME-9617629">
    <property type="pathway name" value="Regulation of FOXO transcriptional activity by acetylation"/>
</dbReference>
<dbReference type="Reactome" id="R-DME-9841922">
    <property type="pathway name" value="MLL4 and MLL3 complexes regulate expression of PPARG target genes in adipogenesis and hepatic steatosis"/>
</dbReference>
<dbReference type="Reactome" id="R-DME-9856649">
    <property type="pathway name" value="Transcriptional and post-translational regulation of MITF-M expression and activity"/>
</dbReference>
<dbReference type="SignaLink" id="Q9VK34"/>
<dbReference type="BioGRID-ORCS" id="34708">
    <property type="hits" value="0 hits in 1 CRISPR screen"/>
</dbReference>
<dbReference type="ChiTaRS" id="Sirt1">
    <property type="organism name" value="fly"/>
</dbReference>
<dbReference type="GenomeRNAi" id="34708"/>
<dbReference type="PRO" id="PR:Q9VK34"/>
<dbReference type="Proteomes" id="UP000000803">
    <property type="component" value="Chromosome 2L"/>
</dbReference>
<dbReference type="Bgee" id="FBgn0024291">
    <property type="expression patterns" value="Expressed in cleaving embryo and 224 other cell types or tissues"/>
</dbReference>
<dbReference type="ExpressionAtlas" id="Q9VK34">
    <property type="expression patterns" value="baseline and differential"/>
</dbReference>
<dbReference type="GO" id="GO:0005737">
    <property type="term" value="C:cytoplasm"/>
    <property type="evidence" value="ECO:0000314"/>
    <property type="project" value="FlyBase"/>
</dbReference>
<dbReference type="GO" id="GO:0005637">
    <property type="term" value="C:nuclear inner membrane"/>
    <property type="evidence" value="ECO:0000318"/>
    <property type="project" value="GO_Central"/>
</dbReference>
<dbReference type="GO" id="GO:0005654">
    <property type="term" value="C:nucleoplasm"/>
    <property type="evidence" value="ECO:0000314"/>
    <property type="project" value="FlyBase"/>
</dbReference>
<dbReference type="GO" id="GO:0005634">
    <property type="term" value="C:nucleus"/>
    <property type="evidence" value="ECO:0000314"/>
    <property type="project" value="FlyBase"/>
</dbReference>
<dbReference type="GO" id="GO:0033553">
    <property type="term" value="C:rDNA heterochromatin"/>
    <property type="evidence" value="ECO:0000318"/>
    <property type="project" value="GO_Central"/>
</dbReference>
<dbReference type="GO" id="GO:0004407">
    <property type="term" value="F:histone deacetylase activity"/>
    <property type="evidence" value="ECO:0000314"/>
    <property type="project" value="FlyBase"/>
</dbReference>
<dbReference type="GO" id="GO:0017136">
    <property type="term" value="F:histone deacetylase activity, NAD-dependent"/>
    <property type="evidence" value="ECO:0000314"/>
    <property type="project" value="FlyBase"/>
</dbReference>
<dbReference type="GO" id="GO:0141051">
    <property type="term" value="F:histone H4K deacetylase activity"/>
    <property type="evidence" value="ECO:0000314"/>
    <property type="project" value="FlyBase"/>
</dbReference>
<dbReference type="GO" id="GO:0046872">
    <property type="term" value="F:metal ion binding"/>
    <property type="evidence" value="ECO:0007669"/>
    <property type="project" value="UniProtKB-KW"/>
</dbReference>
<dbReference type="GO" id="GO:0070403">
    <property type="term" value="F:NAD+ binding"/>
    <property type="evidence" value="ECO:0000318"/>
    <property type="project" value="GO_Central"/>
</dbReference>
<dbReference type="GO" id="GO:0002039">
    <property type="term" value="F:p53 binding"/>
    <property type="evidence" value="ECO:0000318"/>
    <property type="project" value="GO_Central"/>
</dbReference>
<dbReference type="GO" id="GO:0033558">
    <property type="term" value="F:protein lysine deacetylase activity"/>
    <property type="evidence" value="ECO:0000314"/>
    <property type="project" value="FlyBase"/>
</dbReference>
<dbReference type="GO" id="GO:0001223">
    <property type="term" value="F:transcription coactivator binding"/>
    <property type="evidence" value="ECO:0000353"/>
    <property type="project" value="FlyBase"/>
</dbReference>
<dbReference type="GO" id="GO:0003714">
    <property type="term" value="F:transcription corepressor activity"/>
    <property type="evidence" value="ECO:0000318"/>
    <property type="project" value="GO_Central"/>
</dbReference>
<dbReference type="GO" id="GO:0048149">
    <property type="term" value="P:behavioral response to ethanol"/>
    <property type="evidence" value="ECO:0000315"/>
    <property type="project" value="FlyBase"/>
</dbReference>
<dbReference type="GO" id="GO:0032869">
    <property type="term" value="P:cellular response to insulin stimulus"/>
    <property type="evidence" value="ECO:0000315"/>
    <property type="project" value="FlyBase"/>
</dbReference>
<dbReference type="GO" id="GO:0008340">
    <property type="term" value="P:determination of adult lifespan"/>
    <property type="evidence" value="ECO:0000315"/>
    <property type="project" value="FlyBase"/>
</dbReference>
<dbReference type="GO" id="GO:0031507">
    <property type="term" value="P:heterochromatin formation"/>
    <property type="evidence" value="ECO:0000315"/>
    <property type="project" value="FlyBase"/>
</dbReference>
<dbReference type="GO" id="GO:0046331">
    <property type="term" value="P:lateral inhibition"/>
    <property type="evidence" value="ECO:0000315"/>
    <property type="project" value="FlyBase"/>
</dbReference>
<dbReference type="GO" id="GO:0045892">
    <property type="term" value="P:negative regulation of DNA-templated transcription"/>
    <property type="evidence" value="ECO:0000318"/>
    <property type="project" value="GO_Central"/>
</dbReference>
<dbReference type="GO" id="GO:2000253">
    <property type="term" value="P:positive regulation of feeding behavior"/>
    <property type="evidence" value="ECO:0000315"/>
    <property type="project" value="FlyBase"/>
</dbReference>
<dbReference type="GO" id="GO:0045747">
    <property type="term" value="P:positive regulation of Notch signaling pathway"/>
    <property type="evidence" value="ECO:0000315"/>
    <property type="project" value="FlyBase"/>
</dbReference>
<dbReference type="GO" id="GO:0042981">
    <property type="term" value="P:regulation of apoptotic process"/>
    <property type="evidence" value="ECO:0000315"/>
    <property type="project" value="FlyBase"/>
</dbReference>
<dbReference type="GO" id="GO:0006355">
    <property type="term" value="P:regulation of DNA-templated transcription"/>
    <property type="evidence" value="ECO:0000314"/>
    <property type="project" value="FlyBase"/>
</dbReference>
<dbReference type="GO" id="GO:1901416">
    <property type="term" value="P:regulation of response to ethanol"/>
    <property type="evidence" value="ECO:0000315"/>
    <property type="project" value="FlyBase"/>
</dbReference>
<dbReference type="CDD" id="cd01408">
    <property type="entry name" value="SIRT1"/>
    <property type="match status" value="1"/>
</dbReference>
<dbReference type="FunFam" id="3.30.1600.10:FF:000013">
    <property type="entry name" value="NAD-dependent protein deacetylase sirtuin-1"/>
    <property type="match status" value="1"/>
</dbReference>
<dbReference type="Gene3D" id="3.30.1600.10">
    <property type="entry name" value="SIR2/SIRT2 'Small Domain"/>
    <property type="match status" value="1"/>
</dbReference>
<dbReference type="Gene3D" id="3.40.50.1220">
    <property type="entry name" value="TPP-binding domain"/>
    <property type="match status" value="1"/>
</dbReference>
<dbReference type="InterPro" id="IPR029035">
    <property type="entry name" value="DHS-like_NAD/FAD-binding_dom"/>
</dbReference>
<dbReference type="InterPro" id="IPR050134">
    <property type="entry name" value="NAD-dep_sirtuin_deacylases"/>
</dbReference>
<dbReference type="InterPro" id="IPR003000">
    <property type="entry name" value="Sirtuin"/>
</dbReference>
<dbReference type="InterPro" id="IPR026591">
    <property type="entry name" value="Sirtuin_cat_small_dom_sf"/>
</dbReference>
<dbReference type="InterPro" id="IPR026590">
    <property type="entry name" value="Ssirtuin_cat_dom"/>
</dbReference>
<dbReference type="PANTHER" id="PTHR11085:SF9">
    <property type="entry name" value="NAD-DEPENDENT PROTEIN DEACETYLASE SIRTUIN-1"/>
    <property type="match status" value="1"/>
</dbReference>
<dbReference type="PANTHER" id="PTHR11085">
    <property type="entry name" value="NAD-DEPENDENT PROTEIN DEACYLASE SIRTUIN-5, MITOCHONDRIAL-RELATED"/>
    <property type="match status" value="1"/>
</dbReference>
<dbReference type="Pfam" id="PF02146">
    <property type="entry name" value="SIR2"/>
    <property type="match status" value="1"/>
</dbReference>
<dbReference type="SUPFAM" id="SSF52467">
    <property type="entry name" value="DHS-like NAD/FAD-binding domain"/>
    <property type="match status" value="1"/>
</dbReference>
<dbReference type="PROSITE" id="PS50305">
    <property type="entry name" value="SIRTUIN"/>
    <property type="match status" value="1"/>
</dbReference>
<feature type="chain" id="PRO_0000417405" description="NAD-dependent histone deacetylase sirtuin-1">
    <location>
        <begin position="1"/>
        <end position="823"/>
    </location>
</feature>
<feature type="domain" description="Deacetylase sirtuin-type" evidence="2">
    <location>
        <begin position="204"/>
        <end position="499"/>
    </location>
</feature>
<feature type="region of interest" description="Disordered" evidence="3">
    <location>
        <begin position="41"/>
        <end position="146"/>
    </location>
</feature>
<feature type="region of interest" description="Disordered" evidence="3">
    <location>
        <begin position="698"/>
        <end position="722"/>
    </location>
</feature>
<feature type="region of interest" description="Disordered" evidence="3">
    <location>
        <begin position="777"/>
        <end position="823"/>
    </location>
</feature>
<feature type="compositionally biased region" description="Low complexity" evidence="3">
    <location>
        <begin position="41"/>
        <end position="67"/>
    </location>
</feature>
<feature type="compositionally biased region" description="Basic and acidic residues" evidence="3">
    <location>
        <begin position="72"/>
        <end position="95"/>
    </location>
</feature>
<feature type="compositionally biased region" description="Acidic residues" evidence="3">
    <location>
        <begin position="104"/>
        <end position="137"/>
    </location>
</feature>
<feature type="compositionally biased region" description="Acidic residues" evidence="3">
    <location>
        <begin position="698"/>
        <end position="707"/>
    </location>
</feature>
<feature type="compositionally biased region" description="Basic and acidic residues" evidence="3">
    <location>
        <begin position="798"/>
        <end position="813"/>
    </location>
</feature>
<feature type="compositionally biased region" description="Pro residues" evidence="3">
    <location>
        <begin position="814"/>
        <end position="823"/>
    </location>
</feature>
<feature type="active site" description="Proton acceptor" evidence="2">
    <location>
        <position position="331"/>
    </location>
</feature>
<feature type="binding site" evidence="1">
    <location>
        <begin position="229"/>
        <end position="248"/>
    </location>
    <ligand>
        <name>NAD(+)</name>
        <dbReference type="ChEBI" id="CHEBI:57540"/>
    </ligand>
</feature>
<feature type="binding site" evidence="1">
    <location>
        <begin position="313"/>
        <end position="316"/>
    </location>
    <ligand>
        <name>NAD(+)</name>
        <dbReference type="ChEBI" id="CHEBI:57540"/>
    </ligand>
</feature>
<feature type="binding site" evidence="2">
    <location>
        <position position="339"/>
    </location>
    <ligand>
        <name>Zn(2+)</name>
        <dbReference type="ChEBI" id="CHEBI:29105"/>
    </ligand>
</feature>
<feature type="binding site" evidence="2">
    <location>
        <position position="342"/>
    </location>
    <ligand>
        <name>Zn(2+)</name>
        <dbReference type="ChEBI" id="CHEBI:29105"/>
    </ligand>
</feature>
<feature type="binding site" evidence="2">
    <location>
        <position position="363"/>
    </location>
    <ligand>
        <name>Zn(2+)</name>
        <dbReference type="ChEBI" id="CHEBI:29105"/>
    </ligand>
</feature>
<feature type="binding site" evidence="2">
    <location>
        <position position="366"/>
    </location>
    <ligand>
        <name>Zn(2+)</name>
        <dbReference type="ChEBI" id="CHEBI:29105"/>
    </ligand>
</feature>
<feature type="binding site" evidence="1">
    <location>
        <begin position="427"/>
        <end position="429"/>
    </location>
    <ligand>
        <name>NAD(+)</name>
        <dbReference type="ChEBI" id="CHEBI:57540"/>
    </ligand>
</feature>
<feature type="binding site" evidence="1">
    <location>
        <begin position="452"/>
        <end position="454"/>
    </location>
    <ligand>
        <name>NAD(+)</name>
        <dbReference type="ChEBI" id="CHEBI:57540"/>
    </ligand>
</feature>
<feature type="binding site" evidence="1">
    <location>
        <position position="469"/>
    </location>
    <ligand>
        <name>NAD(+)</name>
        <dbReference type="ChEBI" id="CHEBI:57540"/>
    </ligand>
</feature>
<feature type="modified residue" description="Phosphoserine" evidence="10">
    <location>
        <position position="618"/>
    </location>
</feature>
<feature type="modified residue" description="Phosphoserine" evidence="10">
    <location>
        <position position="621"/>
    </location>
</feature>
<feature type="sequence conflict" description="In Ref. 1; AAC79684." evidence="12" ref="1">
    <location>
        <begin position="53"/>
        <end position="54"/>
    </location>
</feature>
<feature type="sequence conflict" description="In Ref. 4; ADG03442." evidence="12" ref="4">
    <original>E</original>
    <variation>K</variation>
    <location>
        <position position="104"/>
    </location>
</feature>
<feature type="sequence conflict" description="In Ref. 1; AAC79684." evidence="12" ref="1">
    <original>Q</original>
    <variation>QFQ</variation>
    <location>
        <position position="290"/>
    </location>
</feature>
<feature type="sequence conflict" description="In Ref. 1; AAC79684." evidence="12" ref="1">
    <original>L</original>
    <variation>H</variation>
    <location>
        <position position="518"/>
    </location>
</feature>
<feature type="sequence conflict" description="In Ref. 1; AAC79684." evidence="12" ref="1">
    <original>P</original>
    <variation>H</variation>
    <location>
        <position position="746"/>
    </location>
</feature>
<feature type="sequence conflict" description="In Ref. 1; AAC79684." evidence="12" ref="1">
    <original>V</original>
    <variation>F</variation>
    <location>
        <position position="753"/>
    </location>
</feature>
<sequence>MMENYEEIRLGHIRSKDLGNQVPDTTQFYPPTKFDFGAEILASTSTEAEAEAEATATTTEPATSELAGKANGEIKTKTLAAREEQEIGANLEHKTKNPTKSMGEDEDDEEEEEEDDEEEEEDDEEGITGTSNEDEDSSSNCSSSVEPDWKLRWLQREFYTGRVPRQVIASIMPHFATGLAGDTDDSVLWDYLAHLLNEPKRRNKLASVNTFDDVISLVKKSQKIIVLTGAGVSVSCGIPDFRSTNGIYARLAHDFPDLPDPQAMFDINYFKRDPRPFYKFAREIYPGEFQPSPCHRFIKMLETKGKLLRNYTQNIDTLERVAGIQRVIECHGSFSTASCTKCRFKCNADALRADIFAQRIPVCPQCQPNKEQSVDASVAVTEEELRQLVENGIMKPDIVFFGEGLPDEYHTVMATDKDVCDLLIVIGSSLKVRPVAHIPSSIPATVPQILINREQLHHLKFDVELLGDSDVIINQICHRLSDNDDCWRQLCCDESVLTESKELMPPEHSNHHLHHHLLHHRHCSSESERQSQLDTDTQSIKSNSSADYILGSAGTCSDSGFESSTFSCGKRSTAAEAAAIERIKTDILVELNETTALSCDRLGLEGPQTTVESYRHLSIDSSKDSGIEQCDNEATPSYVRPSNLVQETKTVAPSLTPIPQQRGKRQTAAERLQPGTFYSHTNNYSYVFPGAQVFWDNDYSDDDDEEEERSHNRHSDLFGNVGHNYKDDDEDACDLNAVPLSPLLPPSLEAHIVTDIVNGSNEPLPNSSPGQKRTACIIEQQPTPAIETEIPPLKKRRPSEENKQQTQIERSEESPPPGQLAAV</sequence>
<accession>Q9VK34</accession>
<accession>D5SHQ6</accession>
<accession>O96505</accession>
<evidence type="ECO:0000250" key="1"/>
<evidence type="ECO:0000255" key="2">
    <source>
        <dbReference type="PROSITE-ProRule" id="PRU00236"/>
    </source>
</evidence>
<evidence type="ECO:0000256" key="3">
    <source>
        <dbReference type="SAM" id="MobiDB-lite"/>
    </source>
</evidence>
<evidence type="ECO:0000269" key="4">
    <source>
    </source>
</evidence>
<evidence type="ECO:0000269" key="5">
    <source>
    </source>
</evidence>
<evidence type="ECO:0000269" key="6">
    <source>
    </source>
</evidence>
<evidence type="ECO:0000269" key="7">
    <source>
    </source>
</evidence>
<evidence type="ECO:0000269" key="8">
    <source>
    </source>
</evidence>
<evidence type="ECO:0000269" key="9">
    <source>
    </source>
</evidence>
<evidence type="ECO:0000269" key="10">
    <source>
    </source>
</evidence>
<evidence type="ECO:0000303" key="11">
    <source>
    </source>
</evidence>
<evidence type="ECO:0000305" key="12"/>
<evidence type="ECO:0000312" key="13">
    <source>
        <dbReference type="FlyBase" id="FBgn0024291"/>
    </source>
</evidence>